<name>RPOZ_CLOBA</name>
<protein>
    <recommendedName>
        <fullName evidence="1">DNA-directed RNA polymerase subunit omega</fullName>
        <shortName evidence="1">RNAP omega subunit</shortName>
        <ecNumber evidence="1">2.7.7.6</ecNumber>
    </recommendedName>
    <alternativeName>
        <fullName evidence="1">RNA polymerase omega subunit</fullName>
    </alternativeName>
    <alternativeName>
        <fullName evidence="1">Transcriptase subunit omega</fullName>
    </alternativeName>
</protein>
<feature type="chain" id="PRO_1000121201" description="DNA-directed RNA polymerase subunit omega">
    <location>
        <begin position="1"/>
        <end position="66"/>
    </location>
</feature>
<keyword id="KW-0240">DNA-directed RNA polymerase</keyword>
<keyword id="KW-0548">Nucleotidyltransferase</keyword>
<keyword id="KW-0804">Transcription</keyword>
<keyword id="KW-0808">Transferase</keyword>
<comment type="function">
    <text evidence="1">Promotes RNA polymerase assembly. Latches the N- and C-terminal regions of the beta' subunit thereby facilitating its interaction with the beta and alpha subunits.</text>
</comment>
<comment type="catalytic activity">
    <reaction evidence="1">
        <text>RNA(n) + a ribonucleoside 5'-triphosphate = RNA(n+1) + diphosphate</text>
        <dbReference type="Rhea" id="RHEA:21248"/>
        <dbReference type="Rhea" id="RHEA-COMP:14527"/>
        <dbReference type="Rhea" id="RHEA-COMP:17342"/>
        <dbReference type="ChEBI" id="CHEBI:33019"/>
        <dbReference type="ChEBI" id="CHEBI:61557"/>
        <dbReference type="ChEBI" id="CHEBI:140395"/>
        <dbReference type="EC" id="2.7.7.6"/>
    </reaction>
</comment>
<comment type="subunit">
    <text evidence="1">The RNAP catalytic core consists of 2 alpha, 1 beta, 1 beta' and 1 omega subunit. When a sigma factor is associated with the core the holoenzyme is formed, which can initiate transcription.</text>
</comment>
<comment type="similarity">
    <text evidence="1">Belongs to the RNA polymerase subunit omega family.</text>
</comment>
<proteinExistence type="inferred from homology"/>
<accession>B2V4A8</accession>
<gene>
    <name evidence="1" type="primary">rpoZ</name>
    <name type="ordered locus">CLH_1163</name>
</gene>
<reference key="1">
    <citation type="submission" date="2008-05" db="EMBL/GenBank/DDBJ databases">
        <title>Complete genome sequence of Clostridium botulinum E3 str. Alaska E43.</title>
        <authorList>
            <person name="Brinkac L.M."/>
            <person name="Brown J.L."/>
            <person name="Bruce D."/>
            <person name="Detter C."/>
            <person name="Munk C."/>
            <person name="Smith L.A."/>
            <person name="Smith T.J."/>
            <person name="Sutton G."/>
            <person name="Brettin T.S."/>
        </authorList>
    </citation>
    <scope>NUCLEOTIDE SEQUENCE [LARGE SCALE GENOMIC DNA]</scope>
    <source>
        <strain>Alaska E43 / Type E3</strain>
    </source>
</reference>
<organism>
    <name type="scientific">Clostridium botulinum (strain Alaska E43 / Type E3)</name>
    <dbReference type="NCBI Taxonomy" id="508767"/>
    <lineage>
        <taxon>Bacteria</taxon>
        <taxon>Bacillati</taxon>
        <taxon>Bacillota</taxon>
        <taxon>Clostridia</taxon>
        <taxon>Eubacteriales</taxon>
        <taxon>Clostridiaceae</taxon>
        <taxon>Clostridium</taxon>
    </lineage>
</organism>
<sequence length="66" mass="7438">MNNSMINPSIVDLLTKVGDRYSLVILTSKRAREIIEGAEPLIKVDSHKPLTIAINEVNEDIVKYEE</sequence>
<dbReference type="EC" id="2.7.7.6" evidence="1"/>
<dbReference type="EMBL" id="CP001078">
    <property type="protein sequence ID" value="ACD54200.1"/>
    <property type="molecule type" value="Genomic_DNA"/>
</dbReference>
<dbReference type="RefSeq" id="WP_003370751.1">
    <property type="nucleotide sequence ID" value="NC_010723.1"/>
</dbReference>
<dbReference type="SMR" id="B2V4A8"/>
<dbReference type="KEGG" id="cbt:CLH_1163"/>
<dbReference type="HOGENOM" id="CLU_125406_6_1_9"/>
<dbReference type="GO" id="GO:0000428">
    <property type="term" value="C:DNA-directed RNA polymerase complex"/>
    <property type="evidence" value="ECO:0007669"/>
    <property type="project" value="UniProtKB-KW"/>
</dbReference>
<dbReference type="GO" id="GO:0003677">
    <property type="term" value="F:DNA binding"/>
    <property type="evidence" value="ECO:0007669"/>
    <property type="project" value="UniProtKB-UniRule"/>
</dbReference>
<dbReference type="GO" id="GO:0003899">
    <property type="term" value="F:DNA-directed RNA polymerase activity"/>
    <property type="evidence" value="ECO:0007669"/>
    <property type="project" value="UniProtKB-UniRule"/>
</dbReference>
<dbReference type="GO" id="GO:0006351">
    <property type="term" value="P:DNA-templated transcription"/>
    <property type="evidence" value="ECO:0007669"/>
    <property type="project" value="UniProtKB-UniRule"/>
</dbReference>
<dbReference type="Gene3D" id="3.90.940.10">
    <property type="match status" value="1"/>
</dbReference>
<dbReference type="HAMAP" id="MF_00366">
    <property type="entry name" value="RNApol_bact_RpoZ"/>
    <property type="match status" value="1"/>
</dbReference>
<dbReference type="InterPro" id="IPR003716">
    <property type="entry name" value="DNA-dir_RNA_pol_omega"/>
</dbReference>
<dbReference type="InterPro" id="IPR006110">
    <property type="entry name" value="Pol_omega/Rpo6/RPB6"/>
</dbReference>
<dbReference type="InterPro" id="IPR036161">
    <property type="entry name" value="RPB6/omega-like_sf"/>
</dbReference>
<dbReference type="NCBIfam" id="TIGR00690">
    <property type="entry name" value="rpoZ"/>
    <property type="match status" value="1"/>
</dbReference>
<dbReference type="PANTHER" id="PTHR34476">
    <property type="entry name" value="DNA-DIRECTED RNA POLYMERASE SUBUNIT OMEGA"/>
    <property type="match status" value="1"/>
</dbReference>
<dbReference type="PANTHER" id="PTHR34476:SF1">
    <property type="entry name" value="DNA-DIRECTED RNA POLYMERASE SUBUNIT OMEGA"/>
    <property type="match status" value="1"/>
</dbReference>
<dbReference type="Pfam" id="PF01192">
    <property type="entry name" value="RNA_pol_Rpb6"/>
    <property type="match status" value="1"/>
</dbReference>
<dbReference type="SMART" id="SM01409">
    <property type="entry name" value="RNA_pol_Rpb6"/>
    <property type="match status" value="1"/>
</dbReference>
<dbReference type="SUPFAM" id="SSF63562">
    <property type="entry name" value="RPB6/omega subunit-like"/>
    <property type="match status" value="1"/>
</dbReference>
<evidence type="ECO:0000255" key="1">
    <source>
        <dbReference type="HAMAP-Rule" id="MF_00366"/>
    </source>
</evidence>